<name>HIS5_BUCMH</name>
<protein>
    <recommendedName>
        <fullName>Imidazole glycerol phosphate synthase subunit HisH</fullName>
        <ecNumber>4.3.2.10</ecNumber>
    </recommendedName>
    <alternativeName>
        <fullName>IGP synthase glutaminase subunit</fullName>
        <ecNumber>3.5.1.2</ecNumber>
    </alternativeName>
    <alternativeName>
        <fullName>IGP synthase subunit HisH</fullName>
    </alternativeName>
    <alternativeName>
        <fullName>ImGP synthase subunit HisH</fullName>
        <shortName>IGPS subunit HisH</shortName>
    </alternativeName>
</protein>
<reference key="1">
    <citation type="submission" date="2002-01" db="EMBL/GenBank/DDBJ databases">
        <title>Levels of selection on genes of mutualistic endosymbionts.</title>
        <authorList>
            <person name="Moran N.A."/>
            <person name="Mira A."/>
        </authorList>
    </citation>
    <scope>NUCLEOTIDE SEQUENCE [GENOMIC DNA]</scope>
</reference>
<keyword id="KW-0028">Amino-acid biosynthesis</keyword>
<keyword id="KW-0963">Cytoplasm</keyword>
<keyword id="KW-0315">Glutamine amidotransferase</keyword>
<keyword id="KW-0368">Histidine biosynthesis</keyword>
<keyword id="KW-0378">Hydrolase</keyword>
<keyword id="KW-0456">Lyase</keyword>
<comment type="function">
    <text evidence="1">IGPS catalyzes the conversion of PRFAR and glutamine to IGP, AICAR and glutamate. The HisH subunit catalyzes the hydrolysis of glutamine to glutamate and ammonia as part of the synthesis of IGP and AICAR. The resulting ammonia molecule is channeled to the active site of HisF (By similarity).</text>
</comment>
<comment type="catalytic activity">
    <reaction>
        <text>5-[(5-phospho-1-deoxy-D-ribulos-1-ylimino)methylamino]-1-(5-phospho-beta-D-ribosyl)imidazole-4-carboxamide + L-glutamine = D-erythro-1-(imidazol-4-yl)glycerol 3-phosphate + 5-amino-1-(5-phospho-beta-D-ribosyl)imidazole-4-carboxamide + L-glutamate + H(+)</text>
        <dbReference type="Rhea" id="RHEA:24793"/>
        <dbReference type="ChEBI" id="CHEBI:15378"/>
        <dbReference type="ChEBI" id="CHEBI:29985"/>
        <dbReference type="ChEBI" id="CHEBI:58278"/>
        <dbReference type="ChEBI" id="CHEBI:58359"/>
        <dbReference type="ChEBI" id="CHEBI:58475"/>
        <dbReference type="ChEBI" id="CHEBI:58525"/>
        <dbReference type="EC" id="4.3.2.10"/>
    </reaction>
</comment>
<comment type="catalytic activity">
    <reaction>
        <text>L-glutamine + H2O = L-glutamate + NH4(+)</text>
        <dbReference type="Rhea" id="RHEA:15889"/>
        <dbReference type="ChEBI" id="CHEBI:15377"/>
        <dbReference type="ChEBI" id="CHEBI:28938"/>
        <dbReference type="ChEBI" id="CHEBI:29985"/>
        <dbReference type="ChEBI" id="CHEBI:58359"/>
        <dbReference type="EC" id="3.5.1.2"/>
    </reaction>
</comment>
<comment type="pathway">
    <text>Amino-acid biosynthesis; L-histidine biosynthesis; L-histidine from 5-phospho-alpha-D-ribose 1-diphosphate: step 5/9.</text>
</comment>
<comment type="subunit">
    <text evidence="1">Heterodimer of HisH and HisF.</text>
</comment>
<comment type="subcellular location">
    <subcellularLocation>
        <location evidence="1">Cytoplasm</location>
    </subcellularLocation>
</comment>
<organism>
    <name type="scientific">Buchnera aphidicola subsp. Melaphis rhois</name>
    <dbReference type="NCBI Taxonomy" id="118103"/>
    <lineage>
        <taxon>Bacteria</taxon>
        <taxon>Pseudomonadati</taxon>
        <taxon>Pseudomonadota</taxon>
        <taxon>Gammaproteobacteria</taxon>
        <taxon>Enterobacterales</taxon>
        <taxon>Erwiniaceae</taxon>
        <taxon>Buchnera</taxon>
    </lineage>
</organism>
<evidence type="ECO:0000250" key="1"/>
<evidence type="ECO:0000255" key="2">
    <source>
        <dbReference type="PROSITE-ProRule" id="PRU00605"/>
    </source>
</evidence>
<sequence>MSVVIINTGCSNLSSIKYAICRLGYNPKISTSVRDILSANKILLPGVGSAYSAIRVLSESNLLNIIKKCQQPFLGICLGMQLLSAFSSEAQGLDLLSIINSPVYRLNSGSLPLPHNGWNNVEICRNNVLFEDIENHSKFYFLHSYSVDITKYTIAKTLYNTYFSAAIQKNNFW</sequence>
<proteinExistence type="inferred from homology"/>
<gene>
    <name type="primary">hisH</name>
</gene>
<accession>Q84I55</accession>
<dbReference type="EC" id="4.3.2.10"/>
<dbReference type="EC" id="3.5.1.2"/>
<dbReference type="EMBL" id="AF465525">
    <property type="protein sequence ID" value="AAO33043.1"/>
    <property type="molecule type" value="Genomic_DNA"/>
</dbReference>
<dbReference type="SMR" id="Q84I55"/>
<dbReference type="UniPathway" id="UPA00031">
    <property type="reaction ID" value="UER00010"/>
</dbReference>
<dbReference type="GO" id="GO:0005737">
    <property type="term" value="C:cytoplasm"/>
    <property type="evidence" value="ECO:0007669"/>
    <property type="project" value="UniProtKB-SubCell"/>
</dbReference>
<dbReference type="GO" id="GO:0004359">
    <property type="term" value="F:glutaminase activity"/>
    <property type="evidence" value="ECO:0007669"/>
    <property type="project" value="UniProtKB-EC"/>
</dbReference>
<dbReference type="GO" id="GO:0000107">
    <property type="term" value="F:imidazoleglycerol-phosphate synthase activity"/>
    <property type="evidence" value="ECO:0007669"/>
    <property type="project" value="RHEA"/>
</dbReference>
<dbReference type="GO" id="GO:0016829">
    <property type="term" value="F:lyase activity"/>
    <property type="evidence" value="ECO:0007669"/>
    <property type="project" value="UniProtKB-KW"/>
</dbReference>
<dbReference type="GO" id="GO:0000105">
    <property type="term" value="P:L-histidine biosynthetic process"/>
    <property type="evidence" value="ECO:0007669"/>
    <property type="project" value="UniProtKB-UniPathway"/>
</dbReference>
<dbReference type="Gene3D" id="3.40.50.880">
    <property type="match status" value="1"/>
</dbReference>
<dbReference type="InterPro" id="IPR029062">
    <property type="entry name" value="Class_I_gatase-like"/>
</dbReference>
<dbReference type="InterPro" id="IPR017926">
    <property type="entry name" value="GATASE"/>
</dbReference>
<dbReference type="InterPro" id="IPR010139">
    <property type="entry name" value="Imidazole-glycPsynth_HisH"/>
</dbReference>
<dbReference type="NCBIfam" id="TIGR01855">
    <property type="entry name" value="IMP_synth_hisH"/>
    <property type="match status" value="1"/>
</dbReference>
<dbReference type="PANTHER" id="PTHR42701">
    <property type="entry name" value="IMIDAZOLE GLYCEROL PHOSPHATE SYNTHASE SUBUNIT HISH"/>
    <property type="match status" value="1"/>
</dbReference>
<dbReference type="PANTHER" id="PTHR42701:SF1">
    <property type="entry name" value="IMIDAZOLE GLYCEROL PHOSPHATE SYNTHASE SUBUNIT HISH"/>
    <property type="match status" value="1"/>
</dbReference>
<dbReference type="Pfam" id="PF00117">
    <property type="entry name" value="GATase"/>
    <property type="match status" value="1"/>
</dbReference>
<dbReference type="PIRSF" id="PIRSF000495">
    <property type="entry name" value="Amidotransf_hisH"/>
    <property type="match status" value="1"/>
</dbReference>
<dbReference type="SUPFAM" id="SSF52317">
    <property type="entry name" value="Class I glutamine amidotransferase-like"/>
    <property type="match status" value="1"/>
</dbReference>
<dbReference type="PROSITE" id="PS51273">
    <property type="entry name" value="GATASE_TYPE_1"/>
    <property type="match status" value="1"/>
</dbReference>
<feature type="chain" id="PRO_0000152358" description="Imidazole glycerol phosphate synthase subunit HisH">
    <location>
        <begin position="1"/>
        <end position="173" status="greater than"/>
    </location>
</feature>
<feature type="domain" description="Glutamine amidotransferase type-1" evidence="2">
    <location>
        <begin position="2"/>
        <end position="173" status="greater than"/>
    </location>
</feature>
<feature type="active site" description="Nucleophile" evidence="2">
    <location>
        <position position="77"/>
    </location>
</feature>
<feature type="non-terminal residue">
    <location>
        <position position="173"/>
    </location>
</feature>